<sequence>MTEYKLVVVGAGGVGKSALTIQLIQNHFVDEYDPTIEDSYRKQVVIDGETCLLDILDTAGQEEYSAMRDQYMRTGEGFLLVFAVNSAKSFEDIGTYREQIKRVKDAEEVPMVLVGNKCDLASWNVNNEQAREVAKQYGIPYIETSAKTRMGVDDAFYTLVREIRKDKDNKGRRGRKMNKPNRRFKCKML</sequence>
<dbReference type="EC" id="3.6.5.2" evidence="2"/>
<dbReference type="EMBL" id="M16429">
    <property type="protein sequence ID" value="AAA28847.1"/>
    <property type="molecule type" value="Genomic_DNA"/>
</dbReference>
<dbReference type="EMBL" id="M16123">
    <property type="protein sequence ID" value="AAA28847.1"/>
    <property type="status" value="JOINED"/>
    <property type="molecule type" value="Genomic_DNA"/>
</dbReference>
<dbReference type="EMBL" id="M16428">
    <property type="protein sequence ID" value="AAA28847.1"/>
    <property type="status" value="JOINED"/>
    <property type="molecule type" value="Genomic_DNA"/>
</dbReference>
<dbReference type="EMBL" id="K01960">
    <property type="protein sequence ID" value="AAA28846.1"/>
    <property type="molecule type" value="mRNA"/>
</dbReference>
<dbReference type="EMBL" id="AF186648">
    <property type="protein sequence ID" value="AAF15514.1"/>
    <property type="molecule type" value="Genomic_DNA"/>
</dbReference>
<dbReference type="EMBL" id="AE014297">
    <property type="protein sequence ID" value="AAF54388.1"/>
    <property type="molecule type" value="Genomic_DNA"/>
</dbReference>
<dbReference type="EMBL" id="AY089541">
    <property type="protein sequence ID" value="AAL90279.1"/>
    <property type="molecule type" value="mRNA"/>
</dbReference>
<dbReference type="EMBL" id="AY094888">
    <property type="protein sequence ID" value="AAM11241.1"/>
    <property type="molecule type" value="mRNA"/>
</dbReference>
<dbReference type="EMBL" id="X73219">
    <property type="protein sequence ID" value="CAA51689.1"/>
    <property type="molecule type" value="Genomic_DNA"/>
</dbReference>
<dbReference type="PIR" id="A29048">
    <property type="entry name" value="TVFF85"/>
</dbReference>
<dbReference type="PIR" id="S35097">
    <property type="entry name" value="S35097"/>
</dbReference>
<dbReference type="RefSeq" id="NP_476699.1">
    <property type="nucleotide sequence ID" value="NM_057351.5"/>
</dbReference>
<dbReference type="SMR" id="P08646"/>
<dbReference type="BioGRID" id="66301">
    <property type="interactions" value="253"/>
</dbReference>
<dbReference type="DIP" id="DIP-23541N"/>
<dbReference type="FunCoup" id="P08646">
    <property type="interactions" value="1197"/>
</dbReference>
<dbReference type="IntAct" id="P08646">
    <property type="interactions" value="22"/>
</dbReference>
<dbReference type="STRING" id="7227.FBpp0081600"/>
<dbReference type="PaxDb" id="7227-FBpp0081600"/>
<dbReference type="EnsemblMetazoa" id="FBtr0082122">
    <property type="protein sequence ID" value="FBpp0081600"/>
    <property type="gene ID" value="FBgn0003205"/>
</dbReference>
<dbReference type="GeneID" id="41140"/>
<dbReference type="KEGG" id="dme:Dmel_CG9375"/>
<dbReference type="AGR" id="FB:FBgn0003205"/>
<dbReference type="CTD" id="41140"/>
<dbReference type="FlyBase" id="FBgn0003205">
    <property type="gene designation" value="Ras85D"/>
</dbReference>
<dbReference type="VEuPathDB" id="VectorBase:FBgn0003205"/>
<dbReference type="eggNOG" id="KOG0395">
    <property type="taxonomic scope" value="Eukaryota"/>
</dbReference>
<dbReference type="GeneTree" id="ENSGT00940000155653"/>
<dbReference type="HOGENOM" id="CLU_041217_9_8_1"/>
<dbReference type="InParanoid" id="P08646"/>
<dbReference type="OMA" id="CCGGCVI"/>
<dbReference type="OrthoDB" id="5976022at2759"/>
<dbReference type="PhylomeDB" id="P08646"/>
<dbReference type="Reactome" id="R-DME-1250347">
    <property type="pathway name" value="SHC1 events in ERBB4 signaling"/>
</dbReference>
<dbReference type="Reactome" id="R-DME-1433557">
    <property type="pathway name" value="Signaling by SCF-KIT"/>
</dbReference>
<dbReference type="Reactome" id="R-DME-171007">
    <property type="pathway name" value="p38MAPK events"/>
</dbReference>
<dbReference type="Reactome" id="R-DME-179812">
    <property type="pathway name" value="GRB2 events in EGFR signaling"/>
</dbReference>
<dbReference type="Reactome" id="R-DME-180336">
    <property type="pathway name" value="SHC1 events in EGFR signaling"/>
</dbReference>
<dbReference type="Reactome" id="R-DME-186763">
    <property type="pathway name" value="Downstream signal transduction"/>
</dbReference>
<dbReference type="Reactome" id="R-DME-1963640">
    <property type="pathway name" value="GRB2 events in ERBB2 signaling"/>
</dbReference>
<dbReference type="Reactome" id="R-DME-2179392">
    <property type="pathway name" value="EGFR Transactivation by Gastrin"/>
</dbReference>
<dbReference type="Reactome" id="R-DME-2424491">
    <property type="pathway name" value="DAP12 signaling"/>
</dbReference>
<dbReference type="Reactome" id="R-DME-2871796">
    <property type="pathway name" value="FCERI mediated MAPK activation"/>
</dbReference>
<dbReference type="Reactome" id="R-DME-375165">
    <property type="pathway name" value="NCAM signaling for neurite out-growth"/>
</dbReference>
<dbReference type="Reactome" id="R-DME-3928662">
    <property type="pathway name" value="EPHB-mediated forward signaling"/>
</dbReference>
<dbReference type="Reactome" id="R-DME-4086398">
    <property type="pathway name" value="Ca2+ pathway"/>
</dbReference>
<dbReference type="Reactome" id="R-DME-432553">
    <property type="pathway name" value="Phosphorylation of PER and TIM"/>
</dbReference>
<dbReference type="Reactome" id="R-DME-5218921">
    <property type="pathway name" value="VEGFR2 mediated cell proliferation"/>
</dbReference>
<dbReference type="Reactome" id="R-DME-5621575">
    <property type="pathway name" value="CD209 (DC-SIGN) signaling"/>
</dbReference>
<dbReference type="Reactome" id="R-DME-5654688">
    <property type="pathway name" value="SHC-mediated cascade:FGFR1"/>
</dbReference>
<dbReference type="Reactome" id="R-DME-5654693">
    <property type="pathway name" value="FRS-mediated FGFR1 signaling"/>
</dbReference>
<dbReference type="Reactome" id="R-DME-5654699">
    <property type="pathway name" value="SHC-mediated cascade:FGFR2"/>
</dbReference>
<dbReference type="Reactome" id="R-DME-5654700">
    <property type="pathway name" value="FRS-mediated FGFR2 signaling"/>
</dbReference>
<dbReference type="Reactome" id="R-DME-5654704">
    <property type="pathway name" value="SHC-mediated cascade:FGFR3"/>
</dbReference>
<dbReference type="Reactome" id="R-DME-5654706">
    <property type="pathway name" value="FRS-mediated FGFR3 signaling"/>
</dbReference>
<dbReference type="Reactome" id="R-DME-5654712">
    <property type="pathway name" value="FRS-mediated FGFR4 signaling"/>
</dbReference>
<dbReference type="Reactome" id="R-DME-5654719">
    <property type="pathway name" value="SHC-mediated cascade:FGFR4"/>
</dbReference>
<dbReference type="Reactome" id="R-DME-5658442">
    <property type="pathway name" value="Regulation of RAS by GAPs"/>
</dbReference>
<dbReference type="Reactome" id="R-DME-5673000">
    <property type="pathway name" value="RAF activation"/>
</dbReference>
<dbReference type="Reactome" id="R-DME-5673001">
    <property type="pathway name" value="RAF/MAP kinase cascade"/>
</dbReference>
<dbReference type="Reactome" id="R-DME-5674135">
    <property type="pathway name" value="MAP2K and MAPK activation"/>
</dbReference>
<dbReference type="Reactome" id="R-DME-5675221">
    <property type="pathway name" value="Negative regulation of MAPK pathway"/>
</dbReference>
<dbReference type="Reactome" id="R-DME-6798695">
    <property type="pathway name" value="Neutrophil degranulation"/>
</dbReference>
<dbReference type="Reactome" id="R-DME-8849471">
    <property type="pathway name" value="PTK6 Regulates RHO GTPases, RAS GTPase and MAP kinases"/>
</dbReference>
<dbReference type="Reactome" id="R-DME-8951936">
    <property type="pathway name" value="RUNX3 regulates p14-ARF"/>
</dbReference>
<dbReference type="Reactome" id="R-DME-9607240">
    <property type="pathway name" value="FLT3 Signaling"/>
</dbReference>
<dbReference type="Reactome" id="R-DME-9634635">
    <property type="pathway name" value="Estrogen-stimulated signaling through PRKCZ"/>
</dbReference>
<dbReference type="Reactome" id="R-DME-9648002">
    <property type="pathway name" value="RAS processing"/>
</dbReference>
<dbReference type="Reactome" id="R-DME-9674555">
    <property type="pathway name" value="Signaling by CSF3 (G-CSF)"/>
</dbReference>
<dbReference type="SignaLink" id="P08646"/>
<dbReference type="BioGRID-ORCS" id="41140">
    <property type="hits" value="1 hit in 3 CRISPR screens"/>
</dbReference>
<dbReference type="ChiTaRS" id="Ras85D">
    <property type="organism name" value="fly"/>
</dbReference>
<dbReference type="GenomeRNAi" id="41140"/>
<dbReference type="PRO" id="PR:P08646"/>
<dbReference type="Proteomes" id="UP000000803">
    <property type="component" value="Chromosome 3R"/>
</dbReference>
<dbReference type="Bgee" id="FBgn0003205">
    <property type="expression patterns" value="Expressed in embryonic/larval hemocyte (Drosophila) and 244 other cell types or tissues"/>
</dbReference>
<dbReference type="GO" id="GO:0016020">
    <property type="term" value="C:membrane"/>
    <property type="evidence" value="ECO:0000314"/>
    <property type="project" value="UniProtKB"/>
</dbReference>
<dbReference type="GO" id="GO:0005886">
    <property type="term" value="C:plasma membrane"/>
    <property type="evidence" value="ECO:0000314"/>
    <property type="project" value="FlyBase"/>
</dbReference>
<dbReference type="GO" id="GO:0003925">
    <property type="term" value="F:G protein activity"/>
    <property type="evidence" value="ECO:0000314"/>
    <property type="project" value="FlyBase"/>
</dbReference>
<dbReference type="GO" id="GO:0019003">
    <property type="term" value="F:GDP binding"/>
    <property type="evidence" value="ECO:0000318"/>
    <property type="project" value="GO_Central"/>
</dbReference>
<dbReference type="GO" id="GO:0005525">
    <property type="term" value="F:GTP binding"/>
    <property type="evidence" value="ECO:0000318"/>
    <property type="project" value="GO_Central"/>
</dbReference>
<dbReference type="GO" id="GO:0003924">
    <property type="term" value="F:GTPase activity"/>
    <property type="evidence" value="ECO:0000314"/>
    <property type="project" value="FlyBase"/>
</dbReference>
<dbReference type="GO" id="GO:0019887">
    <property type="term" value="F:protein kinase regulator activity"/>
    <property type="evidence" value="ECO:0000314"/>
    <property type="project" value="FlyBase"/>
</dbReference>
<dbReference type="GO" id="GO:0043539">
    <property type="term" value="F:protein serine/threonine kinase activator activity"/>
    <property type="evidence" value="ECO:0000314"/>
    <property type="project" value="FlyBase"/>
</dbReference>
<dbReference type="GO" id="GO:0007298">
    <property type="term" value="P:border follicle cell migration"/>
    <property type="evidence" value="ECO:0000315"/>
    <property type="project" value="FlyBase"/>
</dbReference>
<dbReference type="GO" id="GO:0001709">
    <property type="term" value="P:cell fate determination"/>
    <property type="evidence" value="ECO:0000315"/>
    <property type="project" value="FlyBase"/>
</dbReference>
<dbReference type="GO" id="GO:0009267">
    <property type="term" value="P:cellular response to starvation"/>
    <property type="evidence" value="ECO:0000315"/>
    <property type="project" value="FlyBase"/>
</dbReference>
<dbReference type="GO" id="GO:0030381">
    <property type="term" value="P:chorion-containing eggshell pattern formation"/>
    <property type="evidence" value="ECO:0000315"/>
    <property type="project" value="FlyBase"/>
</dbReference>
<dbReference type="GO" id="GO:0048749">
    <property type="term" value="P:compound eye development"/>
    <property type="evidence" value="ECO:0000315"/>
    <property type="project" value="FlyBase"/>
</dbReference>
<dbReference type="GO" id="GO:0051607">
    <property type="term" value="P:defense response to virus"/>
    <property type="evidence" value="ECO:0000315"/>
    <property type="project" value="FlyBase"/>
</dbReference>
<dbReference type="GO" id="GO:0008340">
    <property type="term" value="P:determination of adult lifespan"/>
    <property type="evidence" value="ECO:0000315"/>
    <property type="project" value="FlyBase"/>
</dbReference>
<dbReference type="GO" id="GO:0007391">
    <property type="term" value="P:dorsal closure"/>
    <property type="evidence" value="ECO:0000315"/>
    <property type="project" value="UniProtKB"/>
</dbReference>
<dbReference type="GO" id="GO:0007395">
    <property type="term" value="P:dorsal closure, spreading of leading edge cells"/>
    <property type="evidence" value="ECO:0000315"/>
    <property type="project" value="UniProtKB"/>
</dbReference>
<dbReference type="GO" id="GO:0007173">
    <property type="term" value="P:epidermal growth factor receptor signaling pathway"/>
    <property type="evidence" value="ECO:0000315"/>
    <property type="project" value="FlyBase"/>
</dbReference>
<dbReference type="GO" id="GO:0007427">
    <property type="term" value="P:epithelial cell migration, open tracheal system"/>
    <property type="evidence" value="ECO:0000315"/>
    <property type="project" value="FlyBase"/>
</dbReference>
<dbReference type="GO" id="GO:0035088">
    <property type="term" value="P:establishment or maintenance of apical/basal cell polarity"/>
    <property type="evidence" value="ECO:0000315"/>
    <property type="project" value="FlyBase"/>
</dbReference>
<dbReference type="GO" id="GO:0007455">
    <property type="term" value="P:eye-antennal disc morphogenesis"/>
    <property type="evidence" value="ECO:0000315"/>
    <property type="project" value="FlyBase"/>
</dbReference>
<dbReference type="GO" id="GO:0008543">
    <property type="term" value="P:fibroblast growth factor receptor signaling pathway"/>
    <property type="evidence" value="ECO:0000314"/>
    <property type="project" value="FlyBase"/>
</dbReference>
<dbReference type="GO" id="GO:0007369">
    <property type="term" value="P:gastrulation"/>
    <property type="evidence" value="ECO:0000315"/>
    <property type="project" value="FlyBase"/>
</dbReference>
<dbReference type="GO" id="GO:0035099">
    <property type="term" value="P:hemocyte migration"/>
    <property type="evidence" value="ECO:0000315"/>
    <property type="project" value="FlyBase"/>
</dbReference>
<dbReference type="GO" id="GO:0007476">
    <property type="term" value="P:imaginal disc-derived wing morphogenesis"/>
    <property type="evidence" value="ECO:0000315"/>
    <property type="project" value="FlyBase"/>
</dbReference>
<dbReference type="GO" id="GO:0008586">
    <property type="term" value="P:imaginal disc-derived wing vein morphogenesis"/>
    <property type="evidence" value="ECO:0000315"/>
    <property type="project" value="FlyBase"/>
</dbReference>
<dbReference type="GO" id="GO:0007474">
    <property type="term" value="P:imaginal disc-derived wing vein specification"/>
    <property type="evidence" value="ECO:0000315"/>
    <property type="project" value="FlyBase"/>
</dbReference>
<dbReference type="GO" id="GO:0002168">
    <property type="term" value="P:instar larval development"/>
    <property type="evidence" value="ECO:0000315"/>
    <property type="project" value="FlyBase"/>
</dbReference>
<dbReference type="GO" id="GO:0036335">
    <property type="term" value="P:intestinal stem cell homeostasis"/>
    <property type="evidence" value="ECO:0000315"/>
    <property type="project" value="FlyBase"/>
</dbReference>
<dbReference type="GO" id="GO:0007479">
    <property type="term" value="P:leg disc proximal/distal pattern formation"/>
    <property type="evidence" value="ECO:0000270"/>
    <property type="project" value="FlyBase"/>
</dbReference>
<dbReference type="GO" id="GO:0035170">
    <property type="term" value="P:lymph gland crystal cell differentiation"/>
    <property type="evidence" value="ECO:0000315"/>
    <property type="project" value="FlyBase"/>
</dbReference>
<dbReference type="GO" id="GO:0035169">
    <property type="term" value="P:lymph gland plasmatocyte differentiation"/>
    <property type="evidence" value="ECO:0000315"/>
    <property type="project" value="FlyBase"/>
</dbReference>
<dbReference type="GO" id="GO:0072002">
    <property type="term" value="P:Malpighian tubule development"/>
    <property type="evidence" value="ECO:0000315"/>
    <property type="project" value="FlyBase"/>
</dbReference>
<dbReference type="GO" id="GO:0000165">
    <property type="term" value="P:MAPK cascade"/>
    <property type="evidence" value="ECO:0000315"/>
    <property type="project" value="UniProtKB"/>
</dbReference>
<dbReference type="GO" id="GO:0001710">
    <property type="term" value="P:mesodermal cell fate commitment"/>
    <property type="evidence" value="ECO:0000315"/>
    <property type="project" value="FlyBase"/>
</dbReference>
<dbReference type="GO" id="GO:0007552">
    <property type="term" value="P:metamorphosis"/>
    <property type="evidence" value="ECO:0000315"/>
    <property type="project" value="FlyBase"/>
</dbReference>
<dbReference type="GO" id="GO:0048626">
    <property type="term" value="P:myoblast fate specification"/>
    <property type="evidence" value="ECO:0000316"/>
    <property type="project" value="FlyBase"/>
</dbReference>
<dbReference type="GO" id="GO:0043066">
    <property type="term" value="P:negative regulation of apoptotic process"/>
    <property type="evidence" value="ECO:0000315"/>
    <property type="project" value="FlyBase"/>
</dbReference>
<dbReference type="GO" id="GO:2001234">
    <property type="term" value="P:negative regulation of apoptotic signaling pathway"/>
    <property type="evidence" value="ECO:0000316"/>
    <property type="project" value="FlyBase"/>
</dbReference>
<dbReference type="GO" id="GO:0046673">
    <property type="term" value="P:negative regulation of compound eye retinal cell programmed cell death"/>
    <property type="evidence" value="ECO:0000315"/>
    <property type="project" value="FlyBase"/>
</dbReference>
<dbReference type="GO" id="GO:0010629">
    <property type="term" value="P:negative regulation of gene expression"/>
    <property type="evidence" value="ECO:0000315"/>
    <property type="project" value="UniProtKB"/>
</dbReference>
<dbReference type="GO" id="GO:0016242">
    <property type="term" value="P:negative regulation of macroautophagy"/>
    <property type="evidence" value="ECO:0000315"/>
    <property type="project" value="FlyBase"/>
</dbReference>
<dbReference type="GO" id="GO:0016318">
    <property type="term" value="P:ommatidial rotation"/>
    <property type="evidence" value="ECO:0000315"/>
    <property type="project" value="FlyBase"/>
</dbReference>
<dbReference type="GO" id="GO:0007309">
    <property type="term" value="P:oocyte axis specification"/>
    <property type="evidence" value="ECO:0000315"/>
    <property type="project" value="FlyBase"/>
</dbReference>
<dbReference type="GO" id="GO:0007422">
    <property type="term" value="P:peripheral nervous system development"/>
    <property type="evidence" value="ECO:0000315"/>
    <property type="project" value="FlyBase"/>
</dbReference>
<dbReference type="GO" id="GO:0042461">
    <property type="term" value="P:photoreceptor cell development"/>
    <property type="evidence" value="ECO:0000316"/>
    <property type="project" value="UniProtKB"/>
</dbReference>
<dbReference type="GO" id="GO:0046530">
    <property type="term" value="P:photoreceptor cell differentiation"/>
    <property type="evidence" value="ECO:0000315"/>
    <property type="project" value="FlyBase"/>
</dbReference>
<dbReference type="GO" id="GO:0043703">
    <property type="term" value="P:photoreceptor cell fate determination"/>
    <property type="evidence" value="ECO:0000316"/>
    <property type="project" value="FlyBase"/>
</dbReference>
<dbReference type="GO" id="GO:0008594">
    <property type="term" value="P:photoreceptor cell morphogenesis"/>
    <property type="evidence" value="ECO:0000315"/>
    <property type="project" value="FlyBase"/>
</dbReference>
<dbReference type="GO" id="GO:0008284">
    <property type="term" value="P:positive regulation of cell population proliferation"/>
    <property type="evidence" value="ECO:0000315"/>
    <property type="project" value="FlyBase"/>
</dbReference>
<dbReference type="GO" id="GO:0045793">
    <property type="term" value="P:positive regulation of cell size"/>
    <property type="evidence" value="ECO:0000315"/>
    <property type="project" value="FlyBase"/>
</dbReference>
<dbReference type="GO" id="GO:0070374">
    <property type="term" value="P:positive regulation of ERK1 and ERK2 cascade"/>
    <property type="evidence" value="ECO:0000314"/>
    <property type="project" value="FlyBase"/>
</dbReference>
<dbReference type="GO" id="GO:0035208">
    <property type="term" value="P:positive regulation of hemocyte proliferation"/>
    <property type="evidence" value="ECO:0000315"/>
    <property type="project" value="FlyBase"/>
</dbReference>
<dbReference type="GO" id="GO:0046534">
    <property type="term" value="P:positive regulation of photoreceptor cell differentiation"/>
    <property type="evidence" value="ECO:0000315"/>
    <property type="project" value="FlyBase"/>
</dbReference>
<dbReference type="GO" id="GO:1904263">
    <property type="term" value="P:positive regulation of TORC1 signaling"/>
    <property type="evidence" value="ECO:0000315"/>
    <property type="project" value="FlyBase"/>
</dbReference>
<dbReference type="GO" id="GO:0007465">
    <property type="term" value="P:R7 cell fate commitment"/>
    <property type="evidence" value="ECO:0000315"/>
    <property type="project" value="FlyBase"/>
</dbReference>
<dbReference type="GO" id="GO:0045465">
    <property type="term" value="P:R8 cell differentiation"/>
    <property type="evidence" value="ECO:0000315"/>
    <property type="project" value="FlyBase"/>
</dbReference>
<dbReference type="GO" id="GO:0007265">
    <property type="term" value="P:Ras protein signal transduction"/>
    <property type="evidence" value="ECO:0000315"/>
    <property type="project" value="FlyBase"/>
</dbReference>
<dbReference type="GO" id="GO:0042981">
    <property type="term" value="P:regulation of apoptotic process"/>
    <property type="evidence" value="ECO:0000315"/>
    <property type="project" value="FlyBase"/>
</dbReference>
<dbReference type="GO" id="GO:0008361">
    <property type="term" value="P:regulation of cell size"/>
    <property type="evidence" value="ECO:0000315"/>
    <property type="project" value="FlyBase"/>
</dbReference>
<dbReference type="GO" id="GO:0040008">
    <property type="term" value="P:regulation of growth"/>
    <property type="evidence" value="ECO:0000315"/>
    <property type="project" value="FlyBase"/>
</dbReference>
<dbReference type="GO" id="GO:0040014">
    <property type="term" value="P:regulation of multicellular organism growth"/>
    <property type="evidence" value="ECO:0000315"/>
    <property type="project" value="FlyBase"/>
</dbReference>
<dbReference type="GO" id="GO:0045500">
    <property type="term" value="P:sevenless signaling pathway"/>
    <property type="evidence" value="ECO:0000315"/>
    <property type="project" value="FlyBase"/>
</dbReference>
<dbReference type="GO" id="GO:0048863">
    <property type="term" value="P:stem cell differentiation"/>
    <property type="evidence" value="ECO:0000315"/>
    <property type="project" value="FlyBase"/>
</dbReference>
<dbReference type="GO" id="GO:0048865">
    <property type="term" value="P:stem cell fate commitment"/>
    <property type="evidence" value="ECO:0000315"/>
    <property type="project" value="FlyBase"/>
</dbReference>
<dbReference type="GO" id="GO:0072089">
    <property type="term" value="P:stem cell proliferation"/>
    <property type="evidence" value="ECO:0000315"/>
    <property type="project" value="FlyBase"/>
</dbReference>
<dbReference type="GO" id="GO:0007430">
    <property type="term" value="P:terminal branching, open tracheal system"/>
    <property type="evidence" value="ECO:0000315"/>
    <property type="project" value="FlyBase"/>
</dbReference>
<dbReference type="GO" id="GO:0007362">
    <property type="term" value="P:terminal region determination"/>
    <property type="evidence" value="ECO:0000316"/>
    <property type="project" value="FlyBase"/>
</dbReference>
<dbReference type="GO" id="GO:0008293">
    <property type="term" value="P:torso signaling pathway"/>
    <property type="evidence" value="ECO:0000315"/>
    <property type="project" value="FlyBase"/>
</dbReference>
<dbReference type="GO" id="GO:0060438">
    <property type="term" value="P:trachea development"/>
    <property type="evidence" value="ECO:0000315"/>
    <property type="project" value="FlyBase"/>
</dbReference>
<dbReference type="GO" id="GO:0007426">
    <property type="term" value="P:tracheal outgrowth, open tracheal system"/>
    <property type="evidence" value="ECO:0000315"/>
    <property type="project" value="FlyBase"/>
</dbReference>
<dbReference type="GO" id="GO:0048010">
    <property type="term" value="P:vascular endothelial growth factor receptor signaling pathway"/>
    <property type="evidence" value="ECO:0000315"/>
    <property type="project" value="FlyBase"/>
</dbReference>
<dbReference type="GO" id="GO:0007472">
    <property type="term" value="P:wing disc morphogenesis"/>
    <property type="evidence" value="ECO:0000315"/>
    <property type="project" value="FlyBase"/>
</dbReference>
<dbReference type="GO" id="GO:0035313">
    <property type="term" value="P:wound healing, spreading of epidermal cells"/>
    <property type="evidence" value="ECO:0000316"/>
    <property type="project" value="FlyBase"/>
</dbReference>
<dbReference type="CDD" id="cd04138">
    <property type="entry name" value="H_N_K_Ras_like"/>
    <property type="match status" value="1"/>
</dbReference>
<dbReference type="FunFam" id="3.40.50.300:FF:000096">
    <property type="entry name" value="KRAS proto-oncogene, GTPase"/>
    <property type="match status" value="1"/>
</dbReference>
<dbReference type="Gene3D" id="3.40.50.300">
    <property type="entry name" value="P-loop containing nucleotide triphosphate hydrolases"/>
    <property type="match status" value="1"/>
</dbReference>
<dbReference type="InterPro" id="IPR027417">
    <property type="entry name" value="P-loop_NTPase"/>
</dbReference>
<dbReference type="InterPro" id="IPR005225">
    <property type="entry name" value="Small_GTP-bd"/>
</dbReference>
<dbReference type="InterPro" id="IPR001806">
    <property type="entry name" value="Small_GTPase"/>
</dbReference>
<dbReference type="InterPro" id="IPR020849">
    <property type="entry name" value="Small_GTPase_Ras-type"/>
</dbReference>
<dbReference type="NCBIfam" id="TIGR00231">
    <property type="entry name" value="small_GTP"/>
    <property type="match status" value="1"/>
</dbReference>
<dbReference type="PANTHER" id="PTHR24070">
    <property type="entry name" value="RAS, DI-RAS, AND RHEB FAMILY MEMBERS OF SMALL GTPASE SUPERFAMILY"/>
    <property type="match status" value="1"/>
</dbReference>
<dbReference type="Pfam" id="PF00071">
    <property type="entry name" value="Ras"/>
    <property type="match status" value="1"/>
</dbReference>
<dbReference type="PRINTS" id="PR00449">
    <property type="entry name" value="RASTRNSFRMNG"/>
</dbReference>
<dbReference type="SMART" id="SM00175">
    <property type="entry name" value="RAB"/>
    <property type="match status" value="1"/>
</dbReference>
<dbReference type="SMART" id="SM00176">
    <property type="entry name" value="RAN"/>
    <property type="match status" value="1"/>
</dbReference>
<dbReference type="SMART" id="SM00173">
    <property type="entry name" value="RAS"/>
    <property type="match status" value="1"/>
</dbReference>
<dbReference type="SMART" id="SM00174">
    <property type="entry name" value="RHO"/>
    <property type="match status" value="1"/>
</dbReference>
<dbReference type="SUPFAM" id="SSF52540">
    <property type="entry name" value="P-loop containing nucleoside triphosphate hydrolases"/>
    <property type="match status" value="1"/>
</dbReference>
<dbReference type="PROSITE" id="PS51421">
    <property type="entry name" value="RAS"/>
    <property type="match status" value="1"/>
</dbReference>
<organism>
    <name type="scientific">Drosophila melanogaster</name>
    <name type="common">Fruit fly</name>
    <dbReference type="NCBI Taxonomy" id="7227"/>
    <lineage>
        <taxon>Eukaryota</taxon>
        <taxon>Metazoa</taxon>
        <taxon>Ecdysozoa</taxon>
        <taxon>Arthropoda</taxon>
        <taxon>Hexapoda</taxon>
        <taxon>Insecta</taxon>
        <taxon>Pterygota</taxon>
        <taxon>Neoptera</taxon>
        <taxon>Endopterygota</taxon>
        <taxon>Diptera</taxon>
        <taxon>Brachycera</taxon>
        <taxon>Muscomorpha</taxon>
        <taxon>Ephydroidea</taxon>
        <taxon>Drosophilidae</taxon>
        <taxon>Drosophila</taxon>
        <taxon>Sophophora</taxon>
    </lineage>
</organism>
<accession>P08646</accession>
<accession>Q9V448</accession>
<feature type="chain" id="PRO_0000082665" description="Ras-like protein 1">
    <location>
        <begin position="1"/>
        <end position="186"/>
    </location>
</feature>
<feature type="propeptide" id="PRO_0000281313" description="Removed in mature form" evidence="7">
    <location>
        <begin position="187"/>
        <end position="189"/>
    </location>
</feature>
<feature type="short sequence motif" description="Effector region">
    <location>
        <begin position="32"/>
        <end position="40"/>
    </location>
</feature>
<feature type="binding site" evidence="1">
    <location>
        <begin position="10"/>
        <end position="17"/>
    </location>
    <ligand>
        <name>GTP</name>
        <dbReference type="ChEBI" id="CHEBI:37565"/>
    </ligand>
</feature>
<feature type="binding site" evidence="1">
    <location>
        <begin position="57"/>
        <end position="61"/>
    </location>
    <ligand>
        <name>GTP</name>
        <dbReference type="ChEBI" id="CHEBI:37565"/>
    </ligand>
</feature>
<feature type="binding site" evidence="1">
    <location>
        <begin position="116"/>
        <end position="119"/>
    </location>
    <ligand>
        <name>GTP</name>
        <dbReference type="ChEBI" id="CHEBI:37565"/>
    </ligand>
</feature>
<feature type="modified residue" description="Cysteine methyl ester" evidence="7">
    <location>
        <position position="186"/>
    </location>
</feature>
<feature type="lipid moiety-binding region" description="S-geranylgeranyl cysteine" evidence="8">
    <location>
        <position position="186"/>
    </location>
</feature>
<feature type="mutagenesis site" description="Rough eyes characterized by the presence of additional R7 photoreceptor cells. Normal survival of postmitotic ommatidial cells but differentiation into photoreceptor cells is limited to R8 cells. Less severe Rough eye phenotype; when associated with E-38. Normal eyes; when associated with C-40." evidence="3">
    <original>G</original>
    <variation>V</variation>
    <location>
        <position position="12"/>
    </location>
</feature>
<feature type="mutagenesis site" description="Mild rough eye phenotype; when associated with V-12." evidence="3">
    <original>D</original>
    <variation>E</variation>
    <location>
        <position position="38"/>
    </location>
</feature>
<feature type="mutagenesis site" description="Impaired cell growth, survival of postmitotic ommatidial cells and differentiation into R8 photoreceptors. Normal eye morphology; when associated with V-12." evidence="3">
    <original>Y</original>
    <variation>C</variation>
    <location>
        <position position="40"/>
    </location>
</feature>
<feature type="sequence conflict" description="In Ref. 2; AAA28846." evidence="7" ref="2">
    <original>A</original>
    <variation>P</variation>
    <location>
        <position position="11"/>
    </location>
</feature>
<feature type="sequence conflict" description="In Ref. 2; AAA28846." evidence="7" ref="2">
    <original>VV</original>
    <variation>RF</variation>
    <location>
        <begin position="44"/>
        <end position="45"/>
    </location>
</feature>
<feature type="sequence conflict" description="In Ref. 2; AAA28846." evidence="7" ref="2">
    <original>V</original>
    <variation>I</variation>
    <location>
        <position position="84"/>
    </location>
</feature>
<feature type="sequence conflict" description="In Ref. 2; AAA28846." evidence="7" ref="2">
    <original>R</original>
    <variation>H</variation>
    <location>
        <position position="102"/>
    </location>
</feature>
<feature type="sequence conflict" description="In Ref. 2; AAA28846." evidence="7" ref="2">
    <original>V</original>
    <variation>A</variation>
    <location>
        <position position="114"/>
    </location>
</feature>
<feature type="sequence conflict" description="In Ref. 2; AAA28846." evidence="7" ref="2">
    <original>R</original>
    <variation>C</variation>
    <location>
        <position position="182"/>
    </location>
</feature>
<name>RAS1_DROME</name>
<evidence type="ECO:0000250" key="1"/>
<evidence type="ECO:0000250" key="2">
    <source>
        <dbReference type="UniProtKB" id="P01112"/>
    </source>
</evidence>
<evidence type="ECO:0000269" key="3">
    <source>
    </source>
</evidence>
<evidence type="ECO:0000269" key="4">
    <source>
    </source>
</evidence>
<evidence type="ECO:0000269" key="5">
    <source>
    </source>
</evidence>
<evidence type="ECO:0000269" key="6">
    <source>
    </source>
</evidence>
<evidence type="ECO:0000305" key="7"/>
<evidence type="ECO:0000305" key="8">
    <source>
    </source>
</evidence>
<keyword id="KW-1003">Cell membrane</keyword>
<keyword id="KW-0342">GTP-binding</keyword>
<keyword id="KW-0378">Hydrolase</keyword>
<keyword id="KW-0449">Lipoprotein</keyword>
<keyword id="KW-0472">Membrane</keyword>
<keyword id="KW-0488">Methylation</keyword>
<keyword id="KW-0547">Nucleotide-binding</keyword>
<keyword id="KW-0636">Prenylation</keyword>
<keyword id="KW-1185">Reference proteome</keyword>
<proteinExistence type="evidence at protein level"/>
<gene>
    <name type="primary">Ras85D</name>
    <name type="synonym">Ras1</name>
    <name type="ORF">CG9375</name>
</gene>
<comment type="function">
    <text evidence="2 3 5">Ras proteins bind GDP/GTP and possess intrinsic GTPase activity (By similarity). Plays a role in eye development by regulating cell growth, survival of postmitotic ommatidial cells and differentiation of photoreceptor cells (PubMed:11290305). During larval development, mediates Ptth/tor signaling leading to the production of ecdysone, a hormone required for the initiation of metamorphosis (PubMed:19965758).</text>
</comment>
<comment type="catalytic activity">
    <reaction evidence="2">
        <text>GTP + H2O = GDP + phosphate + H(+)</text>
        <dbReference type="Rhea" id="RHEA:19669"/>
        <dbReference type="ChEBI" id="CHEBI:15377"/>
        <dbReference type="ChEBI" id="CHEBI:15378"/>
        <dbReference type="ChEBI" id="CHEBI:37565"/>
        <dbReference type="ChEBI" id="CHEBI:43474"/>
        <dbReference type="ChEBI" id="CHEBI:58189"/>
        <dbReference type="EC" id="3.6.5.2"/>
    </reaction>
</comment>
<comment type="activity regulation">
    <text>Alternates between an inactive form bound to GDP and an active form bound to GTP. Activated by a guanine nucleotide-exchange factor (GEF) and inactivated by a GTPase-activating protein (GAP).</text>
</comment>
<comment type="subcellular location">
    <subcellularLocation>
        <location evidence="4">Cell membrane</location>
        <topology evidence="4">Lipid-anchor</topology>
        <orientation evidence="4">Cytoplasmic side</orientation>
    </subcellularLocation>
    <text>Loss of prenylation causes protein location to the cytoplasm.</text>
</comment>
<comment type="tissue specificity">
    <text evidence="6">Expressed in the posterior termini of the embryo, restricted mainly to the embryonic central nervous system, and in the eye imaginal disk.</text>
</comment>
<comment type="disruption phenotype">
    <text evidence="5">RNAi-mediated knockdown in the prothoracic gland (PG) delays the onset of pupariation by prolonging the L3 larval stage.</text>
</comment>
<comment type="similarity">
    <text evidence="7">Belongs to the small GTPase superfamily. Ras family.</text>
</comment>
<protein>
    <recommendedName>
        <fullName>Ras-like protein 1</fullName>
        <shortName>Dras1</shortName>
        <ecNumber evidence="2">3.6.5.2</ecNumber>
    </recommendedName>
    <alternativeName>
        <fullName>Dmras85D</fullName>
    </alternativeName>
</protein>
<reference key="1">
    <citation type="journal article" date="1987" name="Gene">
        <title>Sequence and genomic structure of ras homologues Dmras85D and Dmras64B of Drosophila melanogaster.</title>
        <authorList>
            <person name="Brock H.W."/>
        </authorList>
    </citation>
    <scope>NUCLEOTIDE SEQUENCE [GENOMIC DNA]</scope>
</reference>
<reference key="2">
    <citation type="journal article" date="1984" name="Cell">
        <title>The Drosophila ras oncogenes: structure and nucleotide sequence.</title>
        <authorList>
            <person name="Neuman-Silberberg F.S."/>
            <person name="Schejter E."/>
            <person name="Hoffmann F.M."/>
            <person name="Shilo B.-Z."/>
        </authorList>
    </citation>
    <scope>NUCLEOTIDE SEQUENCE [MRNA]</scope>
</reference>
<reference key="3">
    <citation type="journal article" date="1999" name="J. Mol. Evol.">
        <title>Absence of protein polymorphism in the Ras genes of Drosophila melanogaster.</title>
        <authorList>
            <person name="Gasperini R."/>
            <person name="Gibson G."/>
        </authorList>
    </citation>
    <scope>NUCLEOTIDE SEQUENCE [GENOMIC DNA]</scope>
    <source>
        <strain>W13</strain>
    </source>
</reference>
<reference key="4">
    <citation type="journal article" date="2000" name="Science">
        <title>The genome sequence of Drosophila melanogaster.</title>
        <authorList>
            <person name="Adams M.D."/>
            <person name="Celniker S.E."/>
            <person name="Holt R.A."/>
            <person name="Evans C.A."/>
            <person name="Gocayne J.D."/>
            <person name="Amanatides P.G."/>
            <person name="Scherer S.E."/>
            <person name="Li P.W."/>
            <person name="Hoskins R.A."/>
            <person name="Galle R.F."/>
            <person name="George R.A."/>
            <person name="Lewis S.E."/>
            <person name="Richards S."/>
            <person name="Ashburner M."/>
            <person name="Henderson S.N."/>
            <person name="Sutton G.G."/>
            <person name="Wortman J.R."/>
            <person name="Yandell M.D."/>
            <person name="Zhang Q."/>
            <person name="Chen L.X."/>
            <person name="Brandon R.C."/>
            <person name="Rogers Y.-H.C."/>
            <person name="Blazej R.G."/>
            <person name="Champe M."/>
            <person name="Pfeiffer B.D."/>
            <person name="Wan K.H."/>
            <person name="Doyle C."/>
            <person name="Baxter E.G."/>
            <person name="Helt G."/>
            <person name="Nelson C.R."/>
            <person name="Miklos G.L.G."/>
            <person name="Abril J.F."/>
            <person name="Agbayani A."/>
            <person name="An H.-J."/>
            <person name="Andrews-Pfannkoch C."/>
            <person name="Baldwin D."/>
            <person name="Ballew R.M."/>
            <person name="Basu A."/>
            <person name="Baxendale J."/>
            <person name="Bayraktaroglu L."/>
            <person name="Beasley E.M."/>
            <person name="Beeson K.Y."/>
            <person name="Benos P.V."/>
            <person name="Berman B.P."/>
            <person name="Bhandari D."/>
            <person name="Bolshakov S."/>
            <person name="Borkova D."/>
            <person name="Botchan M.R."/>
            <person name="Bouck J."/>
            <person name="Brokstein P."/>
            <person name="Brottier P."/>
            <person name="Burtis K.C."/>
            <person name="Busam D.A."/>
            <person name="Butler H."/>
            <person name="Cadieu E."/>
            <person name="Center A."/>
            <person name="Chandra I."/>
            <person name="Cherry J.M."/>
            <person name="Cawley S."/>
            <person name="Dahlke C."/>
            <person name="Davenport L.B."/>
            <person name="Davies P."/>
            <person name="de Pablos B."/>
            <person name="Delcher A."/>
            <person name="Deng Z."/>
            <person name="Mays A.D."/>
            <person name="Dew I."/>
            <person name="Dietz S.M."/>
            <person name="Dodson K."/>
            <person name="Doup L.E."/>
            <person name="Downes M."/>
            <person name="Dugan-Rocha S."/>
            <person name="Dunkov B.C."/>
            <person name="Dunn P."/>
            <person name="Durbin K.J."/>
            <person name="Evangelista C.C."/>
            <person name="Ferraz C."/>
            <person name="Ferriera S."/>
            <person name="Fleischmann W."/>
            <person name="Fosler C."/>
            <person name="Gabrielian A.E."/>
            <person name="Garg N.S."/>
            <person name="Gelbart W.M."/>
            <person name="Glasser K."/>
            <person name="Glodek A."/>
            <person name="Gong F."/>
            <person name="Gorrell J.H."/>
            <person name="Gu Z."/>
            <person name="Guan P."/>
            <person name="Harris M."/>
            <person name="Harris N.L."/>
            <person name="Harvey D.A."/>
            <person name="Heiman T.J."/>
            <person name="Hernandez J.R."/>
            <person name="Houck J."/>
            <person name="Hostin D."/>
            <person name="Houston K.A."/>
            <person name="Howland T.J."/>
            <person name="Wei M.-H."/>
            <person name="Ibegwam C."/>
            <person name="Jalali M."/>
            <person name="Kalush F."/>
            <person name="Karpen G.H."/>
            <person name="Ke Z."/>
            <person name="Kennison J.A."/>
            <person name="Ketchum K.A."/>
            <person name="Kimmel B.E."/>
            <person name="Kodira C.D."/>
            <person name="Kraft C.L."/>
            <person name="Kravitz S."/>
            <person name="Kulp D."/>
            <person name="Lai Z."/>
            <person name="Lasko P."/>
            <person name="Lei Y."/>
            <person name="Levitsky A.A."/>
            <person name="Li J.H."/>
            <person name="Li Z."/>
            <person name="Liang Y."/>
            <person name="Lin X."/>
            <person name="Liu X."/>
            <person name="Mattei B."/>
            <person name="McIntosh T.C."/>
            <person name="McLeod M.P."/>
            <person name="McPherson D."/>
            <person name="Merkulov G."/>
            <person name="Milshina N.V."/>
            <person name="Mobarry C."/>
            <person name="Morris J."/>
            <person name="Moshrefi A."/>
            <person name="Mount S.M."/>
            <person name="Moy M."/>
            <person name="Murphy B."/>
            <person name="Murphy L."/>
            <person name="Muzny D.M."/>
            <person name="Nelson D.L."/>
            <person name="Nelson D.R."/>
            <person name="Nelson K.A."/>
            <person name="Nixon K."/>
            <person name="Nusskern D.R."/>
            <person name="Pacleb J.M."/>
            <person name="Palazzolo M."/>
            <person name="Pittman G.S."/>
            <person name="Pan S."/>
            <person name="Pollard J."/>
            <person name="Puri V."/>
            <person name="Reese M.G."/>
            <person name="Reinert K."/>
            <person name="Remington K."/>
            <person name="Saunders R.D.C."/>
            <person name="Scheeler F."/>
            <person name="Shen H."/>
            <person name="Shue B.C."/>
            <person name="Siden-Kiamos I."/>
            <person name="Simpson M."/>
            <person name="Skupski M.P."/>
            <person name="Smith T.J."/>
            <person name="Spier E."/>
            <person name="Spradling A.C."/>
            <person name="Stapleton M."/>
            <person name="Strong R."/>
            <person name="Sun E."/>
            <person name="Svirskas R."/>
            <person name="Tector C."/>
            <person name="Turner R."/>
            <person name="Venter E."/>
            <person name="Wang A.H."/>
            <person name="Wang X."/>
            <person name="Wang Z.-Y."/>
            <person name="Wassarman D.A."/>
            <person name="Weinstock G.M."/>
            <person name="Weissenbach J."/>
            <person name="Williams S.M."/>
            <person name="Woodage T."/>
            <person name="Worley K.C."/>
            <person name="Wu D."/>
            <person name="Yang S."/>
            <person name="Yao Q.A."/>
            <person name="Ye J."/>
            <person name="Yeh R.-F."/>
            <person name="Zaveri J.S."/>
            <person name="Zhan M."/>
            <person name="Zhang G."/>
            <person name="Zhao Q."/>
            <person name="Zheng L."/>
            <person name="Zheng X.H."/>
            <person name="Zhong F.N."/>
            <person name="Zhong W."/>
            <person name="Zhou X."/>
            <person name="Zhu S.C."/>
            <person name="Zhu X."/>
            <person name="Smith H.O."/>
            <person name="Gibbs R.A."/>
            <person name="Myers E.W."/>
            <person name="Rubin G.M."/>
            <person name="Venter J.C."/>
        </authorList>
    </citation>
    <scope>NUCLEOTIDE SEQUENCE [LARGE SCALE GENOMIC DNA]</scope>
    <source>
        <strain>Berkeley</strain>
    </source>
</reference>
<reference key="5">
    <citation type="journal article" date="2002" name="Genome Biol.">
        <title>Annotation of the Drosophila melanogaster euchromatic genome: a systematic review.</title>
        <authorList>
            <person name="Misra S."/>
            <person name="Crosby M.A."/>
            <person name="Mungall C.J."/>
            <person name="Matthews B.B."/>
            <person name="Campbell K.S."/>
            <person name="Hradecky P."/>
            <person name="Huang Y."/>
            <person name="Kaminker J.S."/>
            <person name="Millburn G.H."/>
            <person name="Prochnik S.E."/>
            <person name="Smith C.D."/>
            <person name="Tupy J.L."/>
            <person name="Whitfield E.J."/>
            <person name="Bayraktaroglu L."/>
            <person name="Berman B.P."/>
            <person name="Bettencourt B.R."/>
            <person name="Celniker S.E."/>
            <person name="de Grey A.D.N.J."/>
            <person name="Drysdale R.A."/>
            <person name="Harris N.L."/>
            <person name="Richter J."/>
            <person name="Russo S."/>
            <person name="Schroeder A.J."/>
            <person name="Shu S.Q."/>
            <person name="Stapleton M."/>
            <person name="Yamada C."/>
            <person name="Ashburner M."/>
            <person name="Gelbart W.M."/>
            <person name="Rubin G.M."/>
            <person name="Lewis S.E."/>
        </authorList>
    </citation>
    <scope>GENOME REANNOTATION</scope>
    <source>
        <strain>Berkeley</strain>
    </source>
</reference>
<reference key="6">
    <citation type="journal article" date="2002" name="Genome Biol.">
        <title>A Drosophila full-length cDNA resource.</title>
        <authorList>
            <person name="Stapleton M."/>
            <person name="Carlson J.W."/>
            <person name="Brokstein P."/>
            <person name="Yu C."/>
            <person name="Champe M."/>
            <person name="George R.A."/>
            <person name="Guarin H."/>
            <person name="Kronmiller B."/>
            <person name="Pacleb J.M."/>
            <person name="Park S."/>
            <person name="Wan K.H."/>
            <person name="Rubin G.M."/>
            <person name="Celniker S.E."/>
        </authorList>
    </citation>
    <scope>NUCLEOTIDE SEQUENCE [LARGE SCALE MRNA]</scope>
    <source>
        <strain>Berkeley</strain>
        <tissue>Embryo</tissue>
    </source>
</reference>
<reference key="7">
    <citation type="journal article" date="1994" name="Dev. Dyn.">
        <title>Differential expression during embryogenesis of three genes clustered in the Ras1 region of Drosophila melanogaster.</title>
        <authorList>
            <person name="Ezer S.T."/>
            <person name="Sahar D."/>
            <person name="Salzberg A."/>
            <person name="Lev Z."/>
        </authorList>
    </citation>
    <scope>NUCLEOTIDE SEQUENCE [GENOMIC DNA] OF 1-46</scope>
    <scope>TISSUE SPECIFICITY</scope>
    <source>
        <strain>Canton-S</strain>
    </source>
</reference>
<reference key="8">
    <citation type="journal article" date="2001" name="Development">
        <title>Ras controls growth, survival and differentiation in the Drosophila eye by different thresholds of MAP kinase activity.</title>
        <authorList>
            <person name="Halfar K."/>
            <person name="Rommel C."/>
            <person name="Stocker H."/>
            <person name="Hafen E."/>
        </authorList>
    </citation>
    <scope>FUNCTION</scope>
    <scope>MUTAGENESIS OF GLY-12; ASP-38 AND TYR-40</scope>
</reference>
<reference key="9">
    <citation type="journal article" date="2008" name="Biochem. J.">
        <title>Regulation of a Drosophila melanogaster cGMP-specific phosphodiesterase by prenylation and interaction with a prenyl-binding protein.</title>
        <authorList>
            <person name="Day J.P."/>
            <person name="Cleghon V."/>
            <person name="Houslay M.D."/>
            <person name="Davies S.-A."/>
        </authorList>
    </citation>
    <scope>SUBCELLULAR LOCATION</scope>
    <scope>ISOPRENYLATION AT CYS-186</scope>
</reference>
<reference key="10">
    <citation type="journal article" date="2009" name="Science">
        <title>The insect neuropeptide PTTH activates receptor tyrosine kinase torso to initiate metamorphosis.</title>
        <authorList>
            <person name="Rewitz K.F."/>
            <person name="Yamanaka N."/>
            <person name="Gilbert L.I."/>
            <person name="O'Connor M.B."/>
        </authorList>
    </citation>
    <scope>FUNCTION</scope>
    <scope>DISRUPTION PHENOTYPE</scope>
</reference>